<proteinExistence type="inferred from homology"/>
<accession>Q1CX06</accession>
<evidence type="ECO:0000255" key="1">
    <source>
        <dbReference type="HAMAP-Rule" id="MF_00099"/>
    </source>
</evidence>
<reference key="1">
    <citation type="journal article" date="2006" name="Proc. Natl. Acad. Sci. U.S.A.">
        <title>Evolution of sensory complexity recorded in a myxobacterial genome.</title>
        <authorList>
            <person name="Goldman B.S."/>
            <person name="Nierman W.C."/>
            <person name="Kaiser D."/>
            <person name="Slater S.C."/>
            <person name="Durkin A.S."/>
            <person name="Eisen J.A."/>
            <person name="Ronning C.M."/>
            <person name="Barbazuk W.B."/>
            <person name="Blanchard M."/>
            <person name="Field C."/>
            <person name="Halling C."/>
            <person name="Hinkle G."/>
            <person name="Iartchuk O."/>
            <person name="Kim H.S."/>
            <person name="Mackenzie C."/>
            <person name="Madupu R."/>
            <person name="Miller N."/>
            <person name="Shvartsbeyn A."/>
            <person name="Sullivan S.A."/>
            <person name="Vaudin M."/>
            <person name="Wiegand R."/>
            <person name="Kaplan H.B."/>
        </authorList>
    </citation>
    <scope>NUCLEOTIDE SEQUENCE [LARGE SCALE GENOMIC DNA]</scope>
    <source>
        <strain>DK1622</strain>
    </source>
</reference>
<feature type="chain" id="PRO_0000264295" description="Protein-glutamate methylesterase/protein-glutamine glutaminase 4">
    <location>
        <begin position="1"/>
        <end position="353"/>
    </location>
</feature>
<feature type="domain" description="Response regulatory" evidence="1">
    <location>
        <begin position="7"/>
        <end position="124"/>
    </location>
</feature>
<feature type="domain" description="CheB-type methylesterase" evidence="1">
    <location>
        <begin position="158"/>
        <end position="350"/>
    </location>
</feature>
<feature type="active site" evidence="1">
    <location>
        <position position="172"/>
    </location>
</feature>
<feature type="active site" evidence="1">
    <location>
        <position position="199"/>
    </location>
</feature>
<feature type="active site" evidence="1">
    <location>
        <position position="292"/>
    </location>
</feature>
<feature type="modified residue" description="4-aspartylphosphate" evidence="1">
    <location>
        <position position="58"/>
    </location>
</feature>
<sequence>MKNDPLRILVAEDSPTARRLLVEIVRADPALTVVGEARDGVEAVELAQRLRPSLVTMDIQMPRMDGLEATRRIMTEVPTPVVVVSTLVERDIQTSMAALRAGALAVLQKPLGPESPDFDADSRRLRDTLKAMAEVKVVRRWPDRTAPPAPVPTPPAPPVSPTRPGVVALAASTGGPAALFRLLSELPASFPVPLLVVQHIAIGFSEGLAQWLRTAGPLPVKVAEDGEPLLPGHVYLAPDDRHLGVRGEGRAEVSRAAPVNGFRPSATWMFRSVARAYGPASLAVILTGMGQDGLEGVRELHGAGGRILAQDEQSSVVYGMPGVVVGANLAHEVVALPDLASRLTSAFRGSGGV</sequence>
<name>CHEB4_MYXXD</name>
<organism>
    <name type="scientific">Myxococcus xanthus (strain DK1622)</name>
    <dbReference type="NCBI Taxonomy" id="246197"/>
    <lineage>
        <taxon>Bacteria</taxon>
        <taxon>Pseudomonadati</taxon>
        <taxon>Myxococcota</taxon>
        <taxon>Myxococcia</taxon>
        <taxon>Myxococcales</taxon>
        <taxon>Cystobacterineae</taxon>
        <taxon>Myxococcaceae</taxon>
        <taxon>Myxococcus</taxon>
    </lineage>
</organism>
<gene>
    <name evidence="1" type="primary">cheB4</name>
    <name type="ordered locus">MXAN_6952</name>
</gene>
<keyword id="KW-0145">Chemotaxis</keyword>
<keyword id="KW-0963">Cytoplasm</keyword>
<keyword id="KW-0378">Hydrolase</keyword>
<keyword id="KW-0597">Phosphoprotein</keyword>
<keyword id="KW-1185">Reference proteome</keyword>
<protein>
    <recommendedName>
        <fullName evidence="1">Protein-glutamate methylesterase/protein-glutamine glutaminase 4</fullName>
        <ecNumber evidence="1">3.1.1.61</ecNumber>
        <ecNumber evidence="1">3.5.1.44</ecNumber>
    </recommendedName>
</protein>
<dbReference type="EC" id="3.1.1.61" evidence="1"/>
<dbReference type="EC" id="3.5.1.44" evidence="1"/>
<dbReference type="EMBL" id="CP000113">
    <property type="protein sequence ID" value="ABF89213.1"/>
    <property type="molecule type" value="Genomic_DNA"/>
</dbReference>
<dbReference type="RefSeq" id="WP_011556873.1">
    <property type="nucleotide sequence ID" value="NC_008095.1"/>
</dbReference>
<dbReference type="SMR" id="Q1CX06"/>
<dbReference type="STRING" id="246197.MXAN_6952"/>
<dbReference type="EnsemblBacteria" id="ABF89213">
    <property type="protein sequence ID" value="ABF89213"/>
    <property type="gene ID" value="MXAN_6952"/>
</dbReference>
<dbReference type="GeneID" id="41364130"/>
<dbReference type="KEGG" id="mxa:MXAN_6952"/>
<dbReference type="eggNOG" id="COG2201">
    <property type="taxonomic scope" value="Bacteria"/>
</dbReference>
<dbReference type="HOGENOM" id="CLU_000445_51_0_7"/>
<dbReference type="OrthoDB" id="5490992at2"/>
<dbReference type="Proteomes" id="UP000002402">
    <property type="component" value="Chromosome"/>
</dbReference>
<dbReference type="GO" id="GO:0005737">
    <property type="term" value="C:cytoplasm"/>
    <property type="evidence" value="ECO:0007669"/>
    <property type="project" value="UniProtKB-SubCell"/>
</dbReference>
<dbReference type="GO" id="GO:0000156">
    <property type="term" value="F:phosphorelay response regulator activity"/>
    <property type="evidence" value="ECO:0007669"/>
    <property type="project" value="InterPro"/>
</dbReference>
<dbReference type="GO" id="GO:0008984">
    <property type="term" value="F:protein-glutamate methylesterase activity"/>
    <property type="evidence" value="ECO:0007669"/>
    <property type="project" value="UniProtKB-UniRule"/>
</dbReference>
<dbReference type="GO" id="GO:0050568">
    <property type="term" value="F:protein-glutamine glutaminase activity"/>
    <property type="evidence" value="ECO:0007669"/>
    <property type="project" value="UniProtKB-UniRule"/>
</dbReference>
<dbReference type="GO" id="GO:0006935">
    <property type="term" value="P:chemotaxis"/>
    <property type="evidence" value="ECO:0007669"/>
    <property type="project" value="UniProtKB-UniRule"/>
</dbReference>
<dbReference type="CDD" id="cd16432">
    <property type="entry name" value="CheB_Rec"/>
    <property type="match status" value="1"/>
</dbReference>
<dbReference type="CDD" id="cd17541">
    <property type="entry name" value="REC_CheB-like"/>
    <property type="match status" value="1"/>
</dbReference>
<dbReference type="Gene3D" id="3.40.50.2300">
    <property type="match status" value="1"/>
</dbReference>
<dbReference type="Gene3D" id="3.40.50.180">
    <property type="entry name" value="Methylesterase CheB, C-terminal domain"/>
    <property type="match status" value="1"/>
</dbReference>
<dbReference type="HAMAP" id="MF_00099">
    <property type="entry name" value="CheB_chemtxs"/>
    <property type="match status" value="1"/>
</dbReference>
<dbReference type="InterPro" id="IPR008248">
    <property type="entry name" value="CheB-like"/>
</dbReference>
<dbReference type="InterPro" id="IPR035909">
    <property type="entry name" value="CheB_C"/>
</dbReference>
<dbReference type="InterPro" id="IPR011006">
    <property type="entry name" value="CheY-like_superfamily"/>
</dbReference>
<dbReference type="InterPro" id="IPR000673">
    <property type="entry name" value="Sig_transdc_resp-reg_Me-estase"/>
</dbReference>
<dbReference type="InterPro" id="IPR001789">
    <property type="entry name" value="Sig_transdc_resp-reg_receiver"/>
</dbReference>
<dbReference type="NCBIfam" id="NF001965">
    <property type="entry name" value="PRK00742.1"/>
    <property type="match status" value="1"/>
</dbReference>
<dbReference type="PANTHER" id="PTHR42872">
    <property type="entry name" value="PROTEIN-GLUTAMATE METHYLESTERASE/PROTEIN-GLUTAMINE GLUTAMINASE"/>
    <property type="match status" value="1"/>
</dbReference>
<dbReference type="PANTHER" id="PTHR42872:SF6">
    <property type="entry name" value="PROTEIN-GLUTAMATE METHYLESTERASE_PROTEIN-GLUTAMINE GLUTAMINASE"/>
    <property type="match status" value="1"/>
</dbReference>
<dbReference type="Pfam" id="PF01339">
    <property type="entry name" value="CheB_methylest"/>
    <property type="match status" value="1"/>
</dbReference>
<dbReference type="Pfam" id="PF00072">
    <property type="entry name" value="Response_reg"/>
    <property type="match status" value="1"/>
</dbReference>
<dbReference type="PIRSF" id="PIRSF000876">
    <property type="entry name" value="RR_chemtxs_CheB"/>
    <property type="match status" value="1"/>
</dbReference>
<dbReference type="SMART" id="SM00448">
    <property type="entry name" value="REC"/>
    <property type="match status" value="1"/>
</dbReference>
<dbReference type="SUPFAM" id="SSF52172">
    <property type="entry name" value="CheY-like"/>
    <property type="match status" value="1"/>
</dbReference>
<dbReference type="SUPFAM" id="SSF52738">
    <property type="entry name" value="Methylesterase CheB, C-terminal domain"/>
    <property type="match status" value="1"/>
</dbReference>
<dbReference type="PROSITE" id="PS50122">
    <property type="entry name" value="CHEB"/>
    <property type="match status" value="1"/>
</dbReference>
<dbReference type="PROSITE" id="PS50110">
    <property type="entry name" value="RESPONSE_REGULATORY"/>
    <property type="match status" value="1"/>
</dbReference>
<comment type="function">
    <text evidence="1">Involved in chemotaxis. Part of a chemotaxis signal transduction system that modulates chemotaxis in response to various stimuli. Catalyzes the demethylation of specific methylglutamate residues introduced into the chemoreceptors (methyl-accepting chemotaxis proteins or MCP) by CheR. Also mediates the irreversible deamidation of specific glutamine residues to glutamic acid.</text>
</comment>
<comment type="catalytic activity">
    <reaction evidence="1">
        <text>[protein]-L-glutamate 5-O-methyl ester + H2O = L-glutamyl-[protein] + methanol + H(+)</text>
        <dbReference type="Rhea" id="RHEA:23236"/>
        <dbReference type="Rhea" id="RHEA-COMP:10208"/>
        <dbReference type="Rhea" id="RHEA-COMP:10311"/>
        <dbReference type="ChEBI" id="CHEBI:15377"/>
        <dbReference type="ChEBI" id="CHEBI:15378"/>
        <dbReference type="ChEBI" id="CHEBI:17790"/>
        <dbReference type="ChEBI" id="CHEBI:29973"/>
        <dbReference type="ChEBI" id="CHEBI:82795"/>
        <dbReference type="EC" id="3.1.1.61"/>
    </reaction>
</comment>
<comment type="catalytic activity">
    <reaction evidence="1">
        <text>L-glutaminyl-[protein] + H2O = L-glutamyl-[protein] + NH4(+)</text>
        <dbReference type="Rhea" id="RHEA:16441"/>
        <dbReference type="Rhea" id="RHEA-COMP:10207"/>
        <dbReference type="Rhea" id="RHEA-COMP:10208"/>
        <dbReference type="ChEBI" id="CHEBI:15377"/>
        <dbReference type="ChEBI" id="CHEBI:28938"/>
        <dbReference type="ChEBI" id="CHEBI:29973"/>
        <dbReference type="ChEBI" id="CHEBI:30011"/>
        <dbReference type="EC" id="3.5.1.44"/>
    </reaction>
</comment>
<comment type="subcellular location">
    <subcellularLocation>
        <location evidence="1">Cytoplasm</location>
    </subcellularLocation>
</comment>
<comment type="domain">
    <text evidence="1">Contains a C-terminal catalytic domain, and an N-terminal region which modulates catalytic activity.</text>
</comment>
<comment type="PTM">
    <text evidence="1">Phosphorylated by CheA. Phosphorylation of the N-terminal regulatory domain activates the methylesterase activity.</text>
</comment>
<comment type="similarity">
    <text evidence="1">Belongs to the CheB family.</text>
</comment>